<accession>A6TG41</accession>
<evidence type="ECO:0000255" key="1">
    <source>
        <dbReference type="HAMAP-Rule" id="MF_01396"/>
    </source>
</evidence>
<sequence length="79" mass="8256">MENLNMDLLYMAAAVMMGLAAIGAAIGIGILGGKFLEGAARQPDLIPLLRTQFFIVMGLVDAIPMIAVGLGLYVMFAVA</sequence>
<protein>
    <recommendedName>
        <fullName evidence="1">ATP synthase subunit c</fullName>
    </recommendedName>
    <alternativeName>
        <fullName evidence="1">ATP synthase F(0) sector subunit c</fullName>
    </alternativeName>
    <alternativeName>
        <fullName evidence="1">F-type ATPase subunit c</fullName>
        <shortName evidence="1">F-ATPase subunit c</shortName>
    </alternativeName>
    <alternativeName>
        <fullName evidence="1">Lipid-binding protein</fullName>
    </alternativeName>
</protein>
<organism>
    <name type="scientific">Klebsiella pneumoniae subsp. pneumoniae (strain ATCC 700721 / MGH 78578)</name>
    <dbReference type="NCBI Taxonomy" id="272620"/>
    <lineage>
        <taxon>Bacteria</taxon>
        <taxon>Pseudomonadati</taxon>
        <taxon>Pseudomonadota</taxon>
        <taxon>Gammaproteobacteria</taxon>
        <taxon>Enterobacterales</taxon>
        <taxon>Enterobacteriaceae</taxon>
        <taxon>Klebsiella/Raoultella group</taxon>
        <taxon>Klebsiella</taxon>
        <taxon>Klebsiella pneumoniae complex</taxon>
    </lineage>
</organism>
<dbReference type="EMBL" id="CP000647">
    <property type="protein sequence ID" value="ABR79525.1"/>
    <property type="molecule type" value="Genomic_DNA"/>
</dbReference>
<dbReference type="RefSeq" id="WP_000429386.1">
    <property type="nucleotide sequence ID" value="NC_009648.1"/>
</dbReference>
<dbReference type="BMRB" id="A6TG41"/>
<dbReference type="SMR" id="A6TG41"/>
<dbReference type="STRING" id="272620.KPN_04142"/>
<dbReference type="PaxDb" id="272620-KPN_04142"/>
<dbReference type="EnsemblBacteria" id="ABR79525">
    <property type="protein sequence ID" value="ABR79525"/>
    <property type="gene ID" value="KPN_04142"/>
</dbReference>
<dbReference type="GeneID" id="98390858"/>
<dbReference type="KEGG" id="kpn:KPN_04142"/>
<dbReference type="HOGENOM" id="CLU_148047_1_0_6"/>
<dbReference type="Proteomes" id="UP000000265">
    <property type="component" value="Chromosome"/>
</dbReference>
<dbReference type="GO" id="GO:0005886">
    <property type="term" value="C:plasma membrane"/>
    <property type="evidence" value="ECO:0007669"/>
    <property type="project" value="UniProtKB-SubCell"/>
</dbReference>
<dbReference type="GO" id="GO:0045259">
    <property type="term" value="C:proton-transporting ATP synthase complex"/>
    <property type="evidence" value="ECO:0007669"/>
    <property type="project" value="UniProtKB-KW"/>
</dbReference>
<dbReference type="GO" id="GO:0033177">
    <property type="term" value="C:proton-transporting two-sector ATPase complex, proton-transporting domain"/>
    <property type="evidence" value="ECO:0007669"/>
    <property type="project" value="InterPro"/>
</dbReference>
<dbReference type="GO" id="GO:0008289">
    <property type="term" value="F:lipid binding"/>
    <property type="evidence" value="ECO:0007669"/>
    <property type="project" value="UniProtKB-KW"/>
</dbReference>
<dbReference type="GO" id="GO:0046933">
    <property type="term" value="F:proton-transporting ATP synthase activity, rotational mechanism"/>
    <property type="evidence" value="ECO:0007669"/>
    <property type="project" value="UniProtKB-UniRule"/>
</dbReference>
<dbReference type="CDD" id="cd18185">
    <property type="entry name" value="ATP-synt_Fo_c_ATPE"/>
    <property type="match status" value="1"/>
</dbReference>
<dbReference type="FunFam" id="1.20.20.10:FF:000002">
    <property type="entry name" value="ATP synthase subunit c"/>
    <property type="match status" value="1"/>
</dbReference>
<dbReference type="Gene3D" id="1.20.20.10">
    <property type="entry name" value="F1F0 ATP synthase subunit C"/>
    <property type="match status" value="1"/>
</dbReference>
<dbReference type="HAMAP" id="MF_01396">
    <property type="entry name" value="ATP_synth_c_bact"/>
    <property type="match status" value="1"/>
</dbReference>
<dbReference type="InterPro" id="IPR005953">
    <property type="entry name" value="ATP_synth_csu_bac/chlpt"/>
</dbReference>
<dbReference type="InterPro" id="IPR000454">
    <property type="entry name" value="ATP_synth_F0_csu"/>
</dbReference>
<dbReference type="InterPro" id="IPR020537">
    <property type="entry name" value="ATP_synth_F0_csu_DDCD_BS"/>
</dbReference>
<dbReference type="InterPro" id="IPR038662">
    <property type="entry name" value="ATP_synth_F0_csu_sf"/>
</dbReference>
<dbReference type="InterPro" id="IPR002379">
    <property type="entry name" value="ATPase_proteolipid_c-like_dom"/>
</dbReference>
<dbReference type="InterPro" id="IPR035921">
    <property type="entry name" value="F/V-ATP_Csub_sf"/>
</dbReference>
<dbReference type="NCBIfam" id="TIGR01260">
    <property type="entry name" value="ATP_synt_c"/>
    <property type="match status" value="1"/>
</dbReference>
<dbReference type="NCBIfam" id="NF005363">
    <property type="entry name" value="PRK06876.1"/>
    <property type="match status" value="1"/>
</dbReference>
<dbReference type="Pfam" id="PF00137">
    <property type="entry name" value="ATP-synt_C"/>
    <property type="match status" value="1"/>
</dbReference>
<dbReference type="PRINTS" id="PR00124">
    <property type="entry name" value="ATPASEC"/>
</dbReference>
<dbReference type="SUPFAM" id="SSF81333">
    <property type="entry name" value="F1F0 ATP synthase subunit C"/>
    <property type="match status" value="1"/>
</dbReference>
<dbReference type="PROSITE" id="PS00605">
    <property type="entry name" value="ATPASE_C"/>
    <property type="match status" value="1"/>
</dbReference>
<reference key="1">
    <citation type="submission" date="2006-09" db="EMBL/GenBank/DDBJ databases">
        <authorList>
            <consortium name="The Klebsiella pneumonia Genome Sequencing Project"/>
            <person name="McClelland M."/>
            <person name="Sanderson E.K."/>
            <person name="Spieth J."/>
            <person name="Clifton W.S."/>
            <person name="Latreille P."/>
            <person name="Sabo A."/>
            <person name="Pepin K."/>
            <person name="Bhonagiri V."/>
            <person name="Porwollik S."/>
            <person name="Ali J."/>
            <person name="Wilson R.K."/>
        </authorList>
    </citation>
    <scope>NUCLEOTIDE SEQUENCE [LARGE SCALE GENOMIC DNA]</scope>
    <source>
        <strain>ATCC 700721 / MGH 78578</strain>
    </source>
</reference>
<comment type="function">
    <text evidence="1">F(1)F(0) ATP synthase produces ATP from ADP in the presence of a proton or sodium gradient. F-type ATPases consist of two structural domains, F(1) containing the extramembraneous catalytic core and F(0) containing the membrane proton channel, linked together by a central stalk and a peripheral stalk. During catalysis, ATP synthesis in the catalytic domain of F(1) is coupled via a rotary mechanism of the central stalk subunits to proton translocation.</text>
</comment>
<comment type="function">
    <text evidence="1">Key component of the F(0) channel; it plays a direct role in translocation across the membrane. A homomeric c-ring of between 10-14 subunits forms the central stalk rotor element with the F(1) delta and epsilon subunits.</text>
</comment>
<comment type="subunit">
    <text evidence="1">F-type ATPases have 2 components, F(1) - the catalytic core - and F(0) - the membrane proton channel. F(1) has five subunits: alpha(3), beta(3), gamma(1), delta(1), epsilon(1). F(0) has three main subunits: a(1), b(2) and c(10-14). The alpha and beta chains form an alternating ring which encloses part of the gamma chain. F(1) is attached to F(0) by a central stalk formed by the gamma and epsilon chains, while a peripheral stalk is formed by the delta and b chains.</text>
</comment>
<comment type="subcellular location">
    <subcellularLocation>
        <location evidence="1">Cell inner membrane</location>
        <topology evidence="1">Multi-pass membrane protein</topology>
    </subcellularLocation>
</comment>
<comment type="similarity">
    <text evidence="1">Belongs to the ATPase C chain family.</text>
</comment>
<name>ATPL_KLEP7</name>
<gene>
    <name evidence="1" type="primary">atpE</name>
    <name type="ordered locus">KPN78578_41010</name>
    <name type="ORF">KPN_04142</name>
</gene>
<feature type="chain" id="PRO_1000184400" description="ATP synthase subunit c">
    <location>
        <begin position="1"/>
        <end position="79"/>
    </location>
</feature>
<feature type="transmembrane region" description="Helical" evidence="1">
    <location>
        <begin position="11"/>
        <end position="31"/>
    </location>
</feature>
<feature type="transmembrane region" description="Helical" evidence="1">
    <location>
        <begin position="53"/>
        <end position="73"/>
    </location>
</feature>
<feature type="site" description="Reversibly protonated during proton transport" evidence="1">
    <location>
        <position position="61"/>
    </location>
</feature>
<proteinExistence type="inferred from homology"/>
<keyword id="KW-0066">ATP synthesis</keyword>
<keyword id="KW-0997">Cell inner membrane</keyword>
<keyword id="KW-1003">Cell membrane</keyword>
<keyword id="KW-0138">CF(0)</keyword>
<keyword id="KW-0375">Hydrogen ion transport</keyword>
<keyword id="KW-0406">Ion transport</keyword>
<keyword id="KW-0446">Lipid-binding</keyword>
<keyword id="KW-0472">Membrane</keyword>
<keyword id="KW-0812">Transmembrane</keyword>
<keyword id="KW-1133">Transmembrane helix</keyword>
<keyword id="KW-0813">Transport</keyword>